<proteinExistence type="inferred from homology"/>
<gene>
    <name evidence="1" type="primary">rnc</name>
    <name type="ordered locus">lpl1831</name>
</gene>
<organism>
    <name type="scientific">Legionella pneumophila (strain Lens)</name>
    <dbReference type="NCBI Taxonomy" id="297245"/>
    <lineage>
        <taxon>Bacteria</taxon>
        <taxon>Pseudomonadati</taxon>
        <taxon>Pseudomonadota</taxon>
        <taxon>Gammaproteobacteria</taxon>
        <taxon>Legionellales</taxon>
        <taxon>Legionellaceae</taxon>
        <taxon>Legionella</taxon>
    </lineage>
</organism>
<keyword id="KW-0963">Cytoplasm</keyword>
<keyword id="KW-0255">Endonuclease</keyword>
<keyword id="KW-0378">Hydrolase</keyword>
<keyword id="KW-0460">Magnesium</keyword>
<keyword id="KW-0479">Metal-binding</keyword>
<keyword id="KW-0507">mRNA processing</keyword>
<keyword id="KW-0540">Nuclease</keyword>
<keyword id="KW-0694">RNA-binding</keyword>
<keyword id="KW-0698">rRNA processing</keyword>
<keyword id="KW-0699">rRNA-binding</keyword>
<keyword id="KW-0819">tRNA processing</keyword>
<accession>Q5WVI4</accession>
<sequence>MKINLERLCRRLNYHFNNMAYLKQALTHCSAGSDNYERFEFLGDSILSFVIANELFNRFPLHSEGQLSRLRSFLVKGEMLAEIAREIGLGDYLFLGQGELRSGGFRRTSILADALEAILAAIYLDGGMTAAKQIILMLYSSRLDDPDLNHCLKDAKTQLQEFLQASKFALPEYVLTKVEGDEHAQIFHVTCTIEGVSQVAYGTGPNRRKAEQLAAKAMLEQLQG</sequence>
<evidence type="ECO:0000255" key="1">
    <source>
        <dbReference type="HAMAP-Rule" id="MF_00104"/>
    </source>
</evidence>
<comment type="function">
    <text evidence="1">Digests double-stranded RNA. Involved in the processing of primary rRNA transcript to yield the immediate precursors to the large and small rRNAs (23S and 16S). Processes some mRNAs, and tRNAs when they are encoded in the rRNA operon. Processes pre-crRNA and tracrRNA of type II CRISPR loci if present in the organism.</text>
</comment>
<comment type="catalytic activity">
    <reaction evidence="1">
        <text>Endonucleolytic cleavage to 5'-phosphomonoester.</text>
        <dbReference type="EC" id="3.1.26.3"/>
    </reaction>
</comment>
<comment type="cofactor">
    <cofactor evidence="1">
        <name>Mg(2+)</name>
        <dbReference type="ChEBI" id="CHEBI:18420"/>
    </cofactor>
</comment>
<comment type="subunit">
    <text evidence="1">Homodimer.</text>
</comment>
<comment type="subcellular location">
    <subcellularLocation>
        <location evidence="1">Cytoplasm</location>
    </subcellularLocation>
</comment>
<comment type="similarity">
    <text evidence="1">Belongs to the ribonuclease III family.</text>
</comment>
<protein>
    <recommendedName>
        <fullName evidence="1">Ribonuclease 3</fullName>
        <ecNumber evidence="1">3.1.26.3</ecNumber>
    </recommendedName>
    <alternativeName>
        <fullName evidence="1">Ribonuclease III</fullName>
        <shortName evidence="1">RNase III</shortName>
    </alternativeName>
</protein>
<name>RNC_LEGPL</name>
<dbReference type="EC" id="3.1.26.3" evidence="1"/>
<dbReference type="EMBL" id="CR628337">
    <property type="protein sequence ID" value="CAH16070.1"/>
    <property type="molecule type" value="Genomic_DNA"/>
</dbReference>
<dbReference type="RefSeq" id="WP_011215832.1">
    <property type="nucleotide sequence ID" value="NC_006369.1"/>
</dbReference>
<dbReference type="SMR" id="Q5WVI4"/>
<dbReference type="KEGG" id="lpf:lpl1831"/>
<dbReference type="LegioList" id="lpl1831"/>
<dbReference type="HOGENOM" id="CLU_000907_1_1_6"/>
<dbReference type="Proteomes" id="UP000002517">
    <property type="component" value="Chromosome"/>
</dbReference>
<dbReference type="GO" id="GO:0005737">
    <property type="term" value="C:cytoplasm"/>
    <property type="evidence" value="ECO:0007669"/>
    <property type="project" value="UniProtKB-SubCell"/>
</dbReference>
<dbReference type="GO" id="GO:0003725">
    <property type="term" value="F:double-stranded RNA binding"/>
    <property type="evidence" value="ECO:0007669"/>
    <property type="project" value="TreeGrafter"/>
</dbReference>
<dbReference type="GO" id="GO:0046872">
    <property type="term" value="F:metal ion binding"/>
    <property type="evidence" value="ECO:0007669"/>
    <property type="project" value="UniProtKB-KW"/>
</dbReference>
<dbReference type="GO" id="GO:0004525">
    <property type="term" value="F:ribonuclease III activity"/>
    <property type="evidence" value="ECO:0007669"/>
    <property type="project" value="UniProtKB-UniRule"/>
</dbReference>
<dbReference type="GO" id="GO:0019843">
    <property type="term" value="F:rRNA binding"/>
    <property type="evidence" value="ECO:0007669"/>
    <property type="project" value="UniProtKB-KW"/>
</dbReference>
<dbReference type="GO" id="GO:0006397">
    <property type="term" value="P:mRNA processing"/>
    <property type="evidence" value="ECO:0007669"/>
    <property type="project" value="UniProtKB-UniRule"/>
</dbReference>
<dbReference type="GO" id="GO:0010468">
    <property type="term" value="P:regulation of gene expression"/>
    <property type="evidence" value="ECO:0007669"/>
    <property type="project" value="TreeGrafter"/>
</dbReference>
<dbReference type="GO" id="GO:0006364">
    <property type="term" value="P:rRNA processing"/>
    <property type="evidence" value="ECO:0007669"/>
    <property type="project" value="UniProtKB-UniRule"/>
</dbReference>
<dbReference type="GO" id="GO:0008033">
    <property type="term" value="P:tRNA processing"/>
    <property type="evidence" value="ECO:0007669"/>
    <property type="project" value="UniProtKB-KW"/>
</dbReference>
<dbReference type="CDD" id="cd10845">
    <property type="entry name" value="DSRM_RNAse_III_family"/>
    <property type="match status" value="1"/>
</dbReference>
<dbReference type="CDD" id="cd00593">
    <property type="entry name" value="RIBOc"/>
    <property type="match status" value="1"/>
</dbReference>
<dbReference type="FunFam" id="1.10.1520.10:FF:000001">
    <property type="entry name" value="Ribonuclease 3"/>
    <property type="match status" value="1"/>
</dbReference>
<dbReference type="FunFam" id="3.30.160.20:FF:000003">
    <property type="entry name" value="Ribonuclease 3"/>
    <property type="match status" value="1"/>
</dbReference>
<dbReference type="Gene3D" id="3.30.160.20">
    <property type="match status" value="1"/>
</dbReference>
<dbReference type="Gene3D" id="1.10.1520.10">
    <property type="entry name" value="Ribonuclease III domain"/>
    <property type="match status" value="1"/>
</dbReference>
<dbReference type="HAMAP" id="MF_00104">
    <property type="entry name" value="RNase_III"/>
    <property type="match status" value="1"/>
</dbReference>
<dbReference type="InterPro" id="IPR014720">
    <property type="entry name" value="dsRBD_dom"/>
</dbReference>
<dbReference type="InterPro" id="IPR011907">
    <property type="entry name" value="RNase_III"/>
</dbReference>
<dbReference type="InterPro" id="IPR000999">
    <property type="entry name" value="RNase_III_dom"/>
</dbReference>
<dbReference type="InterPro" id="IPR036389">
    <property type="entry name" value="RNase_III_sf"/>
</dbReference>
<dbReference type="NCBIfam" id="TIGR02191">
    <property type="entry name" value="RNaseIII"/>
    <property type="match status" value="1"/>
</dbReference>
<dbReference type="PANTHER" id="PTHR11207:SF0">
    <property type="entry name" value="RIBONUCLEASE 3"/>
    <property type="match status" value="1"/>
</dbReference>
<dbReference type="PANTHER" id="PTHR11207">
    <property type="entry name" value="RIBONUCLEASE III"/>
    <property type="match status" value="1"/>
</dbReference>
<dbReference type="Pfam" id="PF00035">
    <property type="entry name" value="dsrm"/>
    <property type="match status" value="1"/>
</dbReference>
<dbReference type="Pfam" id="PF14622">
    <property type="entry name" value="Ribonucleas_3_3"/>
    <property type="match status" value="1"/>
</dbReference>
<dbReference type="SMART" id="SM00358">
    <property type="entry name" value="DSRM"/>
    <property type="match status" value="1"/>
</dbReference>
<dbReference type="SMART" id="SM00535">
    <property type="entry name" value="RIBOc"/>
    <property type="match status" value="1"/>
</dbReference>
<dbReference type="SUPFAM" id="SSF54768">
    <property type="entry name" value="dsRNA-binding domain-like"/>
    <property type="match status" value="1"/>
</dbReference>
<dbReference type="SUPFAM" id="SSF69065">
    <property type="entry name" value="RNase III domain-like"/>
    <property type="match status" value="1"/>
</dbReference>
<dbReference type="PROSITE" id="PS50137">
    <property type="entry name" value="DS_RBD"/>
    <property type="match status" value="1"/>
</dbReference>
<dbReference type="PROSITE" id="PS00517">
    <property type="entry name" value="RNASE_3_1"/>
    <property type="match status" value="1"/>
</dbReference>
<dbReference type="PROSITE" id="PS50142">
    <property type="entry name" value="RNASE_3_2"/>
    <property type="match status" value="1"/>
</dbReference>
<reference key="1">
    <citation type="journal article" date="2004" name="Nat. Genet.">
        <title>Evidence in the Legionella pneumophila genome for exploitation of host cell functions and high genome plasticity.</title>
        <authorList>
            <person name="Cazalet C."/>
            <person name="Rusniok C."/>
            <person name="Brueggemann H."/>
            <person name="Zidane N."/>
            <person name="Magnier A."/>
            <person name="Ma L."/>
            <person name="Tichit M."/>
            <person name="Jarraud S."/>
            <person name="Bouchier C."/>
            <person name="Vandenesch F."/>
            <person name="Kunst F."/>
            <person name="Etienne J."/>
            <person name="Glaser P."/>
            <person name="Buchrieser C."/>
        </authorList>
    </citation>
    <scope>NUCLEOTIDE SEQUENCE [LARGE SCALE GENOMIC DNA]</scope>
    <source>
        <strain>Lens</strain>
    </source>
</reference>
<feature type="chain" id="PRO_0000228542" description="Ribonuclease 3">
    <location>
        <begin position="1"/>
        <end position="224"/>
    </location>
</feature>
<feature type="domain" description="RNase III" evidence="1">
    <location>
        <begin position="5"/>
        <end position="127"/>
    </location>
</feature>
<feature type="domain" description="DRBM" evidence="1">
    <location>
        <begin position="154"/>
        <end position="224"/>
    </location>
</feature>
<feature type="active site" evidence="1">
    <location>
        <position position="44"/>
    </location>
</feature>
<feature type="active site" evidence="1">
    <location>
        <position position="116"/>
    </location>
</feature>
<feature type="binding site" evidence="1">
    <location>
        <position position="40"/>
    </location>
    <ligand>
        <name>Mg(2+)</name>
        <dbReference type="ChEBI" id="CHEBI:18420"/>
    </ligand>
</feature>
<feature type="binding site" evidence="1">
    <location>
        <position position="113"/>
    </location>
    <ligand>
        <name>Mg(2+)</name>
        <dbReference type="ChEBI" id="CHEBI:18420"/>
    </ligand>
</feature>
<feature type="binding site" evidence="1">
    <location>
        <position position="116"/>
    </location>
    <ligand>
        <name>Mg(2+)</name>
        <dbReference type="ChEBI" id="CHEBI:18420"/>
    </ligand>
</feature>